<keyword id="KW-0002">3D-structure</keyword>
<keyword id="KW-0903">Direct protein sequencing</keyword>
<keyword id="KW-1015">Disulfide bond</keyword>
<keyword id="KW-0872">Ion channel impairing toxin</keyword>
<keyword id="KW-0528">Neurotoxin</keyword>
<keyword id="KW-0632">Potassium channel impairing toxin</keyword>
<keyword id="KW-0964">Secreted</keyword>
<keyword id="KW-0800">Toxin</keyword>
<keyword id="KW-1220">Voltage-gated potassium channel impairing toxin</keyword>
<feature type="peptide" id="PRO_0000044926" description="Potassium channel toxin alpha-KTx 3.2" evidence="3">
    <location>
        <begin position="1"/>
        <end position="38"/>
    </location>
</feature>
<feature type="disulfide bond" evidence="4">
    <location>
        <begin position="8"/>
        <end position="28"/>
    </location>
</feature>
<feature type="disulfide bond" evidence="4">
    <location>
        <begin position="14"/>
        <end position="33"/>
    </location>
</feature>
<feature type="disulfide bond" evidence="4">
    <location>
        <begin position="18"/>
        <end position="35"/>
    </location>
</feature>
<feature type="helix" evidence="8">
    <location>
        <begin position="11"/>
        <end position="14"/>
    </location>
</feature>
<feature type="helix" evidence="8">
    <location>
        <begin position="15"/>
        <end position="21"/>
    </location>
</feature>
<feature type="strand" evidence="8">
    <location>
        <begin position="23"/>
        <end position="29"/>
    </location>
</feature>
<feature type="strand" evidence="8">
    <location>
        <begin position="32"/>
        <end position="37"/>
    </location>
</feature>
<sequence length="38" mass="4097">GVPINVSCTGSPQCIKPCKDAGMRFGKCMNRKCHCTPK</sequence>
<dbReference type="PIR" id="B54471">
    <property type="entry name" value="B54471"/>
</dbReference>
<dbReference type="PDB" id="1AGT">
    <property type="method" value="NMR"/>
    <property type="chains" value="A=1-38"/>
</dbReference>
<dbReference type="PDBsum" id="1AGT"/>
<dbReference type="BMRB" id="P46111"/>
<dbReference type="SMR" id="P46111"/>
<dbReference type="EvolutionaryTrace" id="P46111"/>
<dbReference type="GO" id="GO:0005576">
    <property type="term" value="C:extracellular region"/>
    <property type="evidence" value="ECO:0007669"/>
    <property type="project" value="UniProtKB-SubCell"/>
</dbReference>
<dbReference type="GO" id="GO:0008200">
    <property type="term" value="F:ion channel inhibitor activity"/>
    <property type="evidence" value="ECO:0007669"/>
    <property type="project" value="InterPro"/>
</dbReference>
<dbReference type="GO" id="GO:0015459">
    <property type="term" value="F:potassium channel regulator activity"/>
    <property type="evidence" value="ECO:0007669"/>
    <property type="project" value="UniProtKB-KW"/>
</dbReference>
<dbReference type="GO" id="GO:0090729">
    <property type="term" value="F:toxin activity"/>
    <property type="evidence" value="ECO:0007669"/>
    <property type="project" value="UniProtKB-KW"/>
</dbReference>
<dbReference type="FunFam" id="3.30.30.10:FF:000009">
    <property type="entry name" value="Potassium channel toxin alpha-KTx 4.3"/>
    <property type="match status" value="1"/>
</dbReference>
<dbReference type="Gene3D" id="3.30.30.10">
    <property type="entry name" value="Knottin, scorpion toxin-like"/>
    <property type="match status" value="1"/>
</dbReference>
<dbReference type="InterPro" id="IPR036574">
    <property type="entry name" value="Scorpion_toxin-like_sf"/>
</dbReference>
<dbReference type="InterPro" id="IPR001947">
    <property type="entry name" value="Scorpion_toxinS_K_inh"/>
</dbReference>
<dbReference type="Pfam" id="PF00451">
    <property type="entry name" value="Toxin_2"/>
    <property type="match status" value="1"/>
</dbReference>
<dbReference type="PRINTS" id="PR00286">
    <property type="entry name" value="CHARYBDTOXIN"/>
</dbReference>
<dbReference type="SUPFAM" id="SSF57095">
    <property type="entry name" value="Scorpion toxin-like"/>
    <property type="match status" value="1"/>
</dbReference>
<dbReference type="PROSITE" id="PS01138">
    <property type="entry name" value="SCORP_SHORT_TOXIN"/>
    <property type="match status" value="1"/>
</dbReference>
<accession>P46111</accession>
<organism>
    <name type="scientific">Leiurus hebraeus</name>
    <name type="common">Hebrew deathstalker scorpion</name>
    <name type="synonym">Leiurus quinquestriatus hebraeus</name>
    <dbReference type="NCBI Taxonomy" id="2899558"/>
    <lineage>
        <taxon>Eukaryota</taxon>
        <taxon>Metazoa</taxon>
        <taxon>Ecdysozoa</taxon>
        <taxon>Arthropoda</taxon>
        <taxon>Chelicerata</taxon>
        <taxon>Arachnida</taxon>
        <taxon>Scorpiones</taxon>
        <taxon>Buthida</taxon>
        <taxon>Buthoidea</taxon>
        <taxon>Buthidae</taxon>
        <taxon>Leiurus</taxon>
    </lineage>
</organism>
<reference key="1">
    <citation type="journal article" date="1994" name="Biochemistry">
        <title>Purification and characterization of three inhibitors of voltage-dependent K+ channels from Leiurus quinquestriatus var. hebraeus venom.</title>
        <authorList>
            <person name="Garcia M.L."/>
            <person name="Garcia-Calvo M."/>
            <person name="Hidalgo P."/>
            <person name="Lee A."/>
            <person name="Mackinnon R."/>
        </authorList>
    </citation>
    <scope>PROTEIN SEQUENCE</scope>
    <scope>FUNCTION</scope>
    <scope>SUBCELLULAR LOCATION</scope>
    <source>
        <tissue>Venom</tissue>
    </source>
</reference>
<reference key="2">
    <citation type="journal article" date="2008" name="Protein Sci.">
        <title>Chemical synthesis and 1H-NMR 3D structure determination of AgTx2-MTX chimera, a new potential blocker for Kv1.2 channel, derived from MTX and AgTx2 scorpion toxins.</title>
        <authorList>
            <person name="Pimentel C."/>
            <person name="M'Barek S."/>
            <person name="Visan V."/>
            <person name="Grissmer S."/>
            <person name="Sampieri F."/>
            <person name="Sabatier J.M."/>
            <person name="Darbon H."/>
            <person name="Fajloun Z."/>
        </authorList>
    </citation>
    <scope>FUNCTION</scope>
</reference>
<reference key="3">
    <citation type="journal article" date="2009" name="Proc. Natl. Acad. Sci. U.S.A.">
        <title>A designer ligand specific for Kv1.3 channels from a scorpion neurotoxin-based library.</title>
        <authorList>
            <person name="Takacs Z."/>
            <person name="Toups M."/>
            <person name="Kollewe A."/>
            <person name="Johnson E."/>
            <person name="Cuello L.G."/>
            <person name="Driessens G."/>
            <person name="Biancalana M."/>
            <person name="Koide A."/>
            <person name="Ponte C.G."/>
            <person name="Perozo E."/>
            <person name="Gajewski T.F."/>
            <person name="Suarez-Kurtz G."/>
            <person name="Koide S."/>
            <person name="Goldstein S.A."/>
        </authorList>
    </citation>
    <scope>FUNCTION</scope>
</reference>
<reference key="4">
    <citation type="journal article" date="2019" name="FEBS Lett.">
        <title>Scorpion toxins interact with nicotinic acetylcholine receptors.</title>
        <authorList>
            <person name="Kasheverov I.E."/>
            <person name="Oparin P.B."/>
            <person name="Zhmak M.N."/>
            <person name="Egorova N.S."/>
            <person name="Ivanov I.A."/>
            <person name="Gigolaev A.M."/>
            <person name="Nekrasova O.V."/>
            <person name="Serebryakova M.V."/>
            <person name="Kudryavtsev D.S."/>
            <person name="Prokopev N.A."/>
            <person name="Hoang A.N."/>
            <person name="Tsetlin V.I."/>
            <person name="Vassilevski A.A."/>
            <person name="Utkin Y.N."/>
        </authorList>
    </citation>
    <scope>FUNCTION</scope>
    <scope>RECOMBINANT EXPRESSION</scope>
</reference>
<reference key="5">
    <citation type="journal article" date="1995" name="Protein Sci.">
        <title>Solution structure of the potassium channel inhibitor agitoxin 2: caliper for probing channel geometry.</title>
        <authorList>
            <person name="Krezel A.M."/>
            <person name="Kasibhatla C."/>
            <person name="Hidalgo P."/>
            <person name="Mackinnon R."/>
            <person name="Wagner G."/>
        </authorList>
    </citation>
    <scope>STRUCTURE BY NMR</scope>
    <scope>DISULFIDE BONDS</scope>
</reference>
<comment type="function">
    <text evidence="2 3">Potent inhibitor of the Shaker potassium channels and its mammalian homologs (Kv1.1/KCNA1, Kv1.3/KCNA3, Kv1.6/KCNA6) (Ki&lt;1 nM for all channels) (PubMed:20007782, PubMed:8204618). Also blocks Kv1.2/KCNA2 (IC(50)=26.8 nM) (PubMed:20007782, PubMed:8204618). It also shows a weak interaction with nicotinic acetylcholine receptors (nAChR), suggesting it may weakly inhibit it (PubMed:31276191).</text>
</comment>
<comment type="subcellular location">
    <subcellularLocation>
        <location evidence="3">Secreted</location>
    </subcellularLocation>
</comment>
<comment type="tissue specificity">
    <text evidence="7">Expressed by the venom gland.</text>
</comment>
<comment type="domain">
    <text>Has the structural arrangement of an alpha-helix connected to a beta-sheet by disulfide bonds (CSalpha/beta).</text>
</comment>
<comment type="miscellaneous">
    <text evidence="1 3">Negative results: shows weak blocking activity on KCa3.1/KCNN4 (IC(50)=1152 nM) (PubMed:18042681). Does not block Kv2.1/KCNB1 (Ki &gt;2000 nM) (PubMed:8204618).</text>
</comment>
<comment type="similarity">
    <text evidence="6">Belongs to the short scorpion toxin superfamily. Potassium channel inhibitor family. Alpha-KTx 03 subfamily.</text>
</comment>
<proteinExistence type="evidence at protein level"/>
<evidence type="ECO:0000269" key="1">
    <source>
    </source>
</evidence>
<evidence type="ECO:0000269" key="2">
    <source>
    </source>
</evidence>
<evidence type="ECO:0000269" key="3">
    <source>
    </source>
</evidence>
<evidence type="ECO:0000269" key="4">
    <source>
    </source>
</evidence>
<evidence type="ECO:0000303" key="5">
    <source>
    </source>
</evidence>
<evidence type="ECO:0000305" key="6"/>
<evidence type="ECO:0000305" key="7">
    <source>
    </source>
</evidence>
<evidence type="ECO:0007829" key="8">
    <source>
        <dbReference type="PDB" id="1AGT"/>
    </source>
</evidence>
<name>KAX32_LEIHE</name>
<protein>
    <recommendedName>
        <fullName>Potassium channel toxin alpha-KTx 3.2</fullName>
    </recommendedName>
    <alternativeName>
        <fullName evidence="5">Agitoxin-2</fullName>
        <shortName evidence="5">AgTx-2</shortName>
        <shortName evidence="5">AgTx2</shortName>
    </alternativeName>
</protein>